<reference key="1">
    <citation type="journal article" date="2004" name="Mol. Phylogenet. Evol.">
        <title>Molecular systematics and origin of sociality in mongooses (Herpestidae, Carnivora).</title>
        <authorList>
            <person name="Veron G."/>
            <person name="Colyn M."/>
            <person name="Dunham A.E."/>
            <person name="Taylor P."/>
            <person name="Gaubert P."/>
        </authorList>
    </citation>
    <scope>NUCLEOTIDE SEQUENCE [GENOMIC DNA]</scope>
</reference>
<proteinExistence type="inferred from homology"/>
<sequence length="379" mass="42486">MTNIRKSHPLIKIVNESFIDLPAPSNISAWWNFGSLLGVCLILQILTGLFLAMHYTSDTATAFSSVTHICRDVNYGWIIRYMHANGASMFFICLFMHVGRGVYYGSYTFMETWNIGILLLFTVMATAFMGYVLPWGQMSFWGATVITNLLSAIPYIGTNLVEWIWGGFSVDKATLTRFFAFHFILPFIISALAAVHLLFLHETGSNNPSGISSDSDKIPFHPYYTIKDILGLLVMLMLLMTLVLFSPDLLGDPDNYTPANPLSTPPHIKPEWYFLFAYAILRSIPNKLGGVLALVLSIMVLAIVPLLHTSNQRGMMFRPLGQCLFWLLVADLLTLTWIGGQPVGHPFITIGQLASILYFSIILILMPIFGTIENQLLKW</sequence>
<evidence type="ECO:0000250" key="1"/>
<evidence type="ECO:0000250" key="2">
    <source>
        <dbReference type="UniProtKB" id="P00157"/>
    </source>
</evidence>
<evidence type="ECO:0000255" key="3">
    <source>
        <dbReference type="PROSITE-ProRule" id="PRU00967"/>
    </source>
</evidence>
<evidence type="ECO:0000255" key="4">
    <source>
        <dbReference type="PROSITE-ProRule" id="PRU00968"/>
    </source>
</evidence>
<keyword id="KW-0249">Electron transport</keyword>
<keyword id="KW-0349">Heme</keyword>
<keyword id="KW-0408">Iron</keyword>
<keyword id="KW-0472">Membrane</keyword>
<keyword id="KW-0479">Metal-binding</keyword>
<keyword id="KW-0496">Mitochondrion</keyword>
<keyword id="KW-0999">Mitochondrion inner membrane</keyword>
<keyword id="KW-0679">Respiratory chain</keyword>
<keyword id="KW-0812">Transmembrane</keyword>
<keyword id="KW-1133">Transmembrane helix</keyword>
<keyword id="KW-0813">Transport</keyword>
<keyword id="KW-0830">Ubiquinone</keyword>
<geneLocation type="mitochondrion"/>
<dbReference type="EMBL" id="AF522341">
    <property type="protein sequence ID" value="AAQ08845.1"/>
    <property type="molecule type" value="Genomic_DNA"/>
</dbReference>
<dbReference type="SMR" id="Q71E95"/>
<dbReference type="GO" id="GO:0005743">
    <property type="term" value="C:mitochondrial inner membrane"/>
    <property type="evidence" value="ECO:0007669"/>
    <property type="project" value="UniProtKB-SubCell"/>
</dbReference>
<dbReference type="GO" id="GO:0045275">
    <property type="term" value="C:respiratory chain complex III"/>
    <property type="evidence" value="ECO:0007669"/>
    <property type="project" value="InterPro"/>
</dbReference>
<dbReference type="GO" id="GO:0046872">
    <property type="term" value="F:metal ion binding"/>
    <property type="evidence" value="ECO:0007669"/>
    <property type="project" value="UniProtKB-KW"/>
</dbReference>
<dbReference type="GO" id="GO:0008121">
    <property type="term" value="F:ubiquinol-cytochrome-c reductase activity"/>
    <property type="evidence" value="ECO:0007669"/>
    <property type="project" value="InterPro"/>
</dbReference>
<dbReference type="GO" id="GO:0006122">
    <property type="term" value="P:mitochondrial electron transport, ubiquinol to cytochrome c"/>
    <property type="evidence" value="ECO:0007669"/>
    <property type="project" value="TreeGrafter"/>
</dbReference>
<dbReference type="CDD" id="cd00290">
    <property type="entry name" value="cytochrome_b_C"/>
    <property type="match status" value="1"/>
</dbReference>
<dbReference type="CDD" id="cd00284">
    <property type="entry name" value="Cytochrome_b_N"/>
    <property type="match status" value="1"/>
</dbReference>
<dbReference type="FunFam" id="1.20.810.10:FF:000002">
    <property type="entry name" value="Cytochrome b"/>
    <property type="match status" value="1"/>
</dbReference>
<dbReference type="Gene3D" id="1.20.810.10">
    <property type="entry name" value="Cytochrome Bc1 Complex, Chain C"/>
    <property type="match status" value="1"/>
</dbReference>
<dbReference type="InterPro" id="IPR005798">
    <property type="entry name" value="Cyt_b/b6_C"/>
</dbReference>
<dbReference type="InterPro" id="IPR036150">
    <property type="entry name" value="Cyt_b/b6_C_sf"/>
</dbReference>
<dbReference type="InterPro" id="IPR005797">
    <property type="entry name" value="Cyt_b/b6_N"/>
</dbReference>
<dbReference type="InterPro" id="IPR027387">
    <property type="entry name" value="Cytb/b6-like_sf"/>
</dbReference>
<dbReference type="InterPro" id="IPR030689">
    <property type="entry name" value="Cytochrome_b"/>
</dbReference>
<dbReference type="InterPro" id="IPR048260">
    <property type="entry name" value="Cytochrome_b_C_euk/bac"/>
</dbReference>
<dbReference type="InterPro" id="IPR048259">
    <property type="entry name" value="Cytochrome_b_N_euk/bac"/>
</dbReference>
<dbReference type="InterPro" id="IPR016174">
    <property type="entry name" value="Di-haem_cyt_TM"/>
</dbReference>
<dbReference type="PANTHER" id="PTHR19271">
    <property type="entry name" value="CYTOCHROME B"/>
    <property type="match status" value="1"/>
</dbReference>
<dbReference type="PANTHER" id="PTHR19271:SF16">
    <property type="entry name" value="CYTOCHROME B"/>
    <property type="match status" value="1"/>
</dbReference>
<dbReference type="Pfam" id="PF00032">
    <property type="entry name" value="Cytochrom_B_C"/>
    <property type="match status" value="1"/>
</dbReference>
<dbReference type="Pfam" id="PF00033">
    <property type="entry name" value="Cytochrome_B"/>
    <property type="match status" value="1"/>
</dbReference>
<dbReference type="PIRSF" id="PIRSF038885">
    <property type="entry name" value="COB"/>
    <property type="match status" value="1"/>
</dbReference>
<dbReference type="SUPFAM" id="SSF81648">
    <property type="entry name" value="a domain/subunit of cytochrome bc1 complex (Ubiquinol-cytochrome c reductase)"/>
    <property type="match status" value="1"/>
</dbReference>
<dbReference type="SUPFAM" id="SSF81342">
    <property type="entry name" value="Transmembrane di-heme cytochromes"/>
    <property type="match status" value="1"/>
</dbReference>
<dbReference type="PROSITE" id="PS51003">
    <property type="entry name" value="CYTB_CTER"/>
    <property type="match status" value="1"/>
</dbReference>
<dbReference type="PROSITE" id="PS51002">
    <property type="entry name" value="CYTB_NTER"/>
    <property type="match status" value="1"/>
</dbReference>
<organism>
    <name type="scientific">Ichneumia albicauda</name>
    <name type="common">White-tailed mongoose</name>
    <dbReference type="NCBI Taxonomy" id="205599"/>
    <lineage>
        <taxon>Eukaryota</taxon>
        <taxon>Metazoa</taxon>
        <taxon>Chordata</taxon>
        <taxon>Craniata</taxon>
        <taxon>Vertebrata</taxon>
        <taxon>Euteleostomi</taxon>
        <taxon>Mammalia</taxon>
        <taxon>Eutheria</taxon>
        <taxon>Laurasiatheria</taxon>
        <taxon>Carnivora</taxon>
        <taxon>Feliformia</taxon>
        <taxon>Herpestidae</taxon>
        <taxon>Ichneumia</taxon>
    </lineage>
</organism>
<name>CYB_ICHAL</name>
<feature type="chain" id="PRO_0000247427" description="Cytochrome b">
    <location>
        <begin position="1"/>
        <end position="379"/>
    </location>
</feature>
<feature type="transmembrane region" description="Helical" evidence="2">
    <location>
        <begin position="33"/>
        <end position="53"/>
    </location>
</feature>
<feature type="transmembrane region" description="Helical" evidence="2">
    <location>
        <begin position="77"/>
        <end position="98"/>
    </location>
</feature>
<feature type="transmembrane region" description="Helical" evidence="2">
    <location>
        <begin position="113"/>
        <end position="133"/>
    </location>
</feature>
<feature type="transmembrane region" description="Helical" evidence="2">
    <location>
        <begin position="178"/>
        <end position="198"/>
    </location>
</feature>
<feature type="transmembrane region" description="Helical" evidence="2">
    <location>
        <begin position="226"/>
        <end position="246"/>
    </location>
</feature>
<feature type="transmembrane region" description="Helical" evidence="2">
    <location>
        <begin position="288"/>
        <end position="308"/>
    </location>
</feature>
<feature type="transmembrane region" description="Helical" evidence="2">
    <location>
        <begin position="320"/>
        <end position="340"/>
    </location>
</feature>
<feature type="transmembrane region" description="Helical" evidence="2">
    <location>
        <begin position="347"/>
        <end position="367"/>
    </location>
</feature>
<feature type="binding site" description="axial binding residue" evidence="2">
    <location>
        <position position="83"/>
    </location>
    <ligand>
        <name>heme b</name>
        <dbReference type="ChEBI" id="CHEBI:60344"/>
        <label>b562</label>
    </ligand>
    <ligandPart>
        <name>Fe</name>
        <dbReference type="ChEBI" id="CHEBI:18248"/>
    </ligandPart>
</feature>
<feature type="binding site" description="axial binding residue" evidence="2">
    <location>
        <position position="97"/>
    </location>
    <ligand>
        <name>heme b</name>
        <dbReference type="ChEBI" id="CHEBI:60344"/>
        <label>b566</label>
    </ligand>
    <ligandPart>
        <name>Fe</name>
        <dbReference type="ChEBI" id="CHEBI:18248"/>
    </ligandPart>
</feature>
<feature type="binding site" description="axial binding residue" evidence="2">
    <location>
        <position position="182"/>
    </location>
    <ligand>
        <name>heme b</name>
        <dbReference type="ChEBI" id="CHEBI:60344"/>
        <label>b562</label>
    </ligand>
    <ligandPart>
        <name>Fe</name>
        <dbReference type="ChEBI" id="CHEBI:18248"/>
    </ligandPart>
</feature>
<feature type="binding site" description="axial binding residue" evidence="2">
    <location>
        <position position="196"/>
    </location>
    <ligand>
        <name>heme b</name>
        <dbReference type="ChEBI" id="CHEBI:60344"/>
        <label>b566</label>
    </ligand>
    <ligandPart>
        <name>Fe</name>
        <dbReference type="ChEBI" id="CHEBI:18248"/>
    </ligandPart>
</feature>
<feature type="binding site" evidence="2">
    <location>
        <position position="201"/>
    </location>
    <ligand>
        <name>a ubiquinone</name>
        <dbReference type="ChEBI" id="CHEBI:16389"/>
    </ligand>
</feature>
<gene>
    <name type="primary">MT-CYB</name>
    <name type="synonym">COB</name>
    <name type="synonym">CYTB</name>
    <name type="synonym">MTCYB</name>
</gene>
<accession>Q71E95</accession>
<protein>
    <recommendedName>
        <fullName>Cytochrome b</fullName>
    </recommendedName>
    <alternativeName>
        <fullName>Complex III subunit 3</fullName>
    </alternativeName>
    <alternativeName>
        <fullName>Complex III subunit III</fullName>
    </alternativeName>
    <alternativeName>
        <fullName>Cytochrome b-c1 complex subunit 3</fullName>
    </alternativeName>
    <alternativeName>
        <fullName>Ubiquinol-cytochrome-c reductase complex cytochrome b subunit</fullName>
    </alternativeName>
</protein>
<comment type="function">
    <text evidence="2">Component of the ubiquinol-cytochrome c reductase complex (complex III or cytochrome b-c1 complex) that is part of the mitochondrial respiratory chain. The b-c1 complex mediates electron transfer from ubiquinol to cytochrome c. Contributes to the generation of a proton gradient across the mitochondrial membrane that is then used for ATP synthesis.</text>
</comment>
<comment type="cofactor">
    <cofactor evidence="2">
        <name>heme b</name>
        <dbReference type="ChEBI" id="CHEBI:60344"/>
    </cofactor>
    <text evidence="2">Binds 2 heme b groups non-covalently.</text>
</comment>
<comment type="subunit">
    <text evidence="2">The cytochrome bc1 complex contains 11 subunits: 3 respiratory subunits (MT-CYB, CYC1 and UQCRFS1), 2 core proteins (UQCRC1 and UQCRC2) and 6 low-molecular weight proteins (UQCRH/QCR6, UQCRB/QCR7, UQCRQ/QCR8, UQCR10/QCR9, UQCR11/QCR10 and a cleavage product of UQCRFS1). This cytochrome bc1 complex then forms a dimer.</text>
</comment>
<comment type="subcellular location">
    <subcellularLocation>
        <location evidence="2">Mitochondrion inner membrane</location>
        <topology evidence="2">Multi-pass membrane protein</topology>
    </subcellularLocation>
</comment>
<comment type="miscellaneous">
    <text evidence="1">Heme 1 (or BL or b562) is low-potential and absorbs at about 562 nm, and heme 2 (or BH or b566) is high-potential and absorbs at about 566 nm.</text>
</comment>
<comment type="similarity">
    <text evidence="3 4">Belongs to the cytochrome b family.</text>
</comment>
<comment type="caution">
    <text evidence="2">The full-length protein contains only eight transmembrane helices, not nine as predicted by bioinformatics tools.</text>
</comment>